<reference key="1">
    <citation type="submission" date="2007-06" db="EMBL/GenBank/DDBJ databases">
        <authorList>
            <person name="Dodson R.J."/>
            <person name="Harkins D."/>
            <person name="Paulsen I.T."/>
        </authorList>
    </citation>
    <scope>NUCLEOTIDE SEQUENCE [LARGE SCALE GENOMIC DNA]</scope>
    <source>
        <strain>DSM 24068 / PA7</strain>
    </source>
</reference>
<feature type="chain" id="PRO_0000374942" description="Ribosomal protein uS12 methylthiotransferase RimO">
    <location>
        <begin position="1"/>
        <end position="440"/>
    </location>
</feature>
<feature type="domain" description="MTTase N-terminal" evidence="1">
    <location>
        <begin position="6"/>
        <end position="116"/>
    </location>
</feature>
<feature type="domain" description="Radical SAM core" evidence="2">
    <location>
        <begin position="135"/>
        <end position="373"/>
    </location>
</feature>
<feature type="domain" description="TRAM" evidence="1">
    <location>
        <begin position="376"/>
        <end position="440"/>
    </location>
</feature>
<feature type="binding site" evidence="1">
    <location>
        <position position="15"/>
    </location>
    <ligand>
        <name>[4Fe-4S] cluster</name>
        <dbReference type="ChEBI" id="CHEBI:49883"/>
        <label>1</label>
    </ligand>
</feature>
<feature type="binding site" evidence="1">
    <location>
        <position position="51"/>
    </location>
    <ligand>
        <name>[4Fe-4S] cluster</name>
        <dbReference type="ChEBI" id="CHEBI:49883"/>
        <label>1</label>
    </ligand>
</feature>
<feature type="binding site" evidence="1">
    <location>
        <position position="80"/>
    </location>
    <ligand>
        <name>[4Fe-4S] cluster</name>
        <dbReference type="ChEBI" id="CHEBI:49883"/>
        <label>1</label>
    </ligand>
</feature>
<feature type="binding site" evidence="1">
    <location>
        <position position="149"/>
    </location>
    <ligand>
        <name>[4Fe-4S] cluster</name>
        <dbReference type="ChEBI" id="CHEBI:49883"/>
        <label>2</label>
        <note>4Fe-4S-S-AdoMet</note>
    </ligand>
</feature>
<feature type="binding site" evidence="1">
    <location>
        <position position="153"/>
    </location>
    <ligand>
        <name>[4Fe-4S] cluster</name>
        <dbReference type="ChEBI" id="CHEBI:49883"/>
        <label>2</label>
        <note>4Fe-4S-S-AdoMet</note>
    </ligand>
</feature>
<feature type="binding site" evidence="1">
    <location>
        <position position="156"/>
    </location>
    <ligand>
        <name>[4Fe-4S] cluster</name>
        <dbReference type="ChEBI" id="CHEBI:49883"/>
        <label>2</label>
        <note>4Fe-4S-S-AdoMet</note>
    </ligand>
</feature>
<name>RIMO_PSEP7</name>
<sequence length="440" mass="48898">MSTPTPKVGFVSLGCPKALVDSERILTQLRMEGYEVVPTYEDADVVVVNTCGFIDSAKAESLEVIGEAIAENGKVIVTGCMGVEEHAIRDVHPSVLAVTGPQQYEQVVTAVHEVVPPKTEHNPLIDLVPPQGIKLTPRHYAYLKISEGCNHSCSFCIIPSMRGKLVSRPVGDVLSEAERLVKAGVKELLVISQDTSAYGVDLKYKTDFWNGQPVKTRMKELCEALGGMGVWVRLHYVYPYPNVDDVIPLMAAGKLLPYLDIPFQHASPKVLKAMKRPAFEDKTLARFKHWREICPELTIRSTFIVGFPGETEEDFQYLLDWLTEAQLDRVGCFQYSPVEGAPANELGLEPVPDEVKQDRWERFMAHQQAISAARLQLKVGKEIEVLIDEVDEQGAVGRSWADAPEIDGNVFVDSDALKPGDKVRVRITDADEYDLWAEPV</sequence>
<proteinExistence type="inferred from homology"/>
<accession>A6VA58</accession>
<dbReference type="EC" id="2.8.4.4" evidence="1"/>
<dbReference type="EMBL" id="CP000744">
    <property type="protein sequence ID" value="ABR85753.1"/>
    <property type="molecule type" value="Genomic_DNA"/>
</dbReference>
<dbReference type="RefSeq" id="WP_012076925.1">
    <property type="nucleotide sequence ID" value="NC_009656.1"/>
</dbReference>
<dbReference type="SMR" id="A6VA58"/>
<dbReference type="KEGG" id="pap:PSPA7_4596"/>
<dbReference type="HOGENOM" id="CLU_018697_0_0_6"/>
<dbReference type="Proteomes" id="UP000001582">
    <property type="component" value="Chromosome"/>
</dbReference>
<dbReference type="GO" id="GO:0005829">
    <property type="term" value="C:cytosol"/>
    <property type="evidence" value="ECO:0007669"/>
    <property type="project" value="TreeGrafter"/>
</dbReference>
<dbReference type="GO" id="GO:0051539">
    <property type="term" value="F:4 iron, 4 sulfur cluster binding"/>
    <property type="evidence" value="ECO:0007669"/>
    <property type="project" value="UniProtKB-UniRule"/>
</dbReference>
<dbReference type="GO" id="GO:0035599">
    <property type="term" value="F:aspartic acid methylthiotransferase activity"/>
    <property type="evidence" value="ECO:0007669"/>
    <property type="project" value="TreeGrafter"/>
</dbReference>
<dbReference type="GO" id="GO:0046872">
    <property type="term" value="F:metal ion binding"/>
    <property type="evidence" value="ECO:0007669"/>
    <property type="project" value="UniProtKB-KW"/>
</dbReference>
<dbReference type="GO" id="GO:0103039">
    <property type="term" value="F:protein methylthiotransferase activity"/>
    <property type="evidence" value="ECO:0007669"/>
    <property type="project" value="UniProtKB-EC"/>
</dbReference>
<dbReference type="GO" id="GO:0006400">
    <property type="term" value="P:tRNA modification"/>
    <property type="evidence" value="ECO:0007669"/>
    <property type="project" value="InterPro"/>
</dbReference>
<dbReference type="CDD" id="cd01335">
    <property type="entry name" value="Radical_SAM"/>
    <property type="match status" value="1"/>
</dbReference>
<dbReference type="FunFam" id="2.40.50.140:FF:000060">
    <property type="entry name" value="Ribosomal protein S12 methylthiotransferase RimO"/>
    <property type="match status" value="1"/>
</dbReference>
<dbReference type="FunFam" id="3.40.50.12160:FF:000002">
    <property type="entry name" value="Ribosomal protein S12 methylthiotransferase RimO"/>
    <property type="match status" value="1"/>
</dbReference>
<dbReference type="FunFam" id="3.80.30.20:FF:000001">
    <property type="entry name" value="tRNA-2-methylthio-N(6)-dimethylallyladenosine synthase 2"/>
    <property type="match status" value="1"/>
</dbReference>
<dbReference type="Gene3D" id="3.40.50.12160">
    <property type="entry name" value="Methylthiotransferase, N-terminal domain"/>
    <property type="match status" value="1"/>
</dbReference>
<dbReference type="Gene3D" id="2.40.50.140">
    <property type="entry name" value="Nucleic acid-binding proteins"/>
    <property type="match status" value="1"/>
</dbReference>
<dbReference type="Gene3D" id="3.80.30.20">
    <property type="entry name" value="tm_1862 like domain"/>
    <property type="match status" value="1"/>
</dbReference>
<dbReference type="HAMAP" id="MF_01865">
    <property type="entry name" value="MTTase_RimO"/>
    <property type="match status" value="1"/>
</dbReference>
<dbReference type="InterPro" id="IPR006638">
    <property type="entry name" value="Elp3/MiaA/NifB-like_rSAM"/>
</dbReference>
<dbReference type="InterPro" id="IPR005839">
    <property type="entry name" value="Methylthiotransferase"/>
</dbReference>
<dbReference type="InterPro" id="IPR020612">
    <property type="entry name" value="Methylthiotransferase_CS"/>
</dbReference>
<dbReference type="InterPro" id="IPR013848">
    <property type="entry name" value="Methylthiotransferase_N"/>
</dbReference>
<dbReference type="InterPro" id="IPR038135">
    <property type="entry name" value="Methylthiotransferase_N_sf"/>
</dbReference>
<dbReference type="InterPro" id="IPR012340">
    <property type="entry name" value="NA-bd_OB-fold"/>
</dbReference>
<dbReference type="InterPro" id="IPR005840">
    <property type="entry name" value="Ribosomal_uS12_MeSTrfase_RimO"/>
</dbReference>
<dbReference type="InterPro" id="IPR007197">
    <property type="entry name" value="rSAM"/>
</dbReference>
<dbReference type="InterPro" id="IPR023404">
    <property type="entry name" value="rSAM_horseshoe"/>
</dbReference>
<dbReference type="InterPro" id="IPR002792">
    <property type="entry name" value="TRAM_dom"/>
</dbReference>
<dbReference type="NCBIfam" id="TIGR01125">
    <property type="entry name" value="30S ribosomal protein S12 methylthiotransferase RimO"/>
    <property type="match status" value="1"/>
</dbReference>
<dbReference type="NCBIfam" id="TIGR00089">
    <property type="entry name" value="MiaB/RimO family radical SAM methylthiotransferase"/>
    <property type="match status" value="1"/>
</dbReference>
<dbReference type="PANTHER" id="PTHR43837">
    <property type="entry name" value="RIBOSOMAL PROTEIN S12 METHYLTHIOTRANSFERASE RIMO"/>
    <property type="match status" value="1"/>
</dbReference>
<dbReference type="PANTHER" id="PTHR43837:SF1">
    <property type="entry name" value="RIBOSOMAL PROTEIN US12 METHYLTHIOTRANSFERASE RIMO"/>
    <property type="match status" value="1"/>
</dbReference>
<dbReference type="Pfam" id="PF04055">
    <property type="entry name" value="Radical_SAM"/>
    <property type="match status" value="1"/>
</dbReference>
<dbReference type="Pfam" id="PF18693">
    <property type="entry name" value="TRAM_2"/>
    <property type="match status" value="1"/>
</dbReference>
<dbReference type="Pfam" id="PF00919">
    <property type="entry name" value="UPF0004"/>
    <property type="match status" value="1"/>
</dbReference>
<dbReference type="SFLD" id="SFLDG01082">
    <property type="entry name" value="B12-binding_domain_containing"/>
    <property type="match status" value="1"/>
</dbReference>
<dbReference type="SFLD" id="SFLDG01061">
    <property type="entry name" value="methylthiotransferase"/>
    <property type="match status" value="1"/>
</dbReference>
<dbReference type="SFLD" id="SFLDF00274">
    <property type="entry name" value="ribosomal_protein_S12_methylth"/>
    <property type="match status" value="1"/>
</dbReference>
<dbReference type="SMART" id="SM00729">
    <property type="entry name" value="Elp3"/>
    <property type="match status" value="1"/>
</dbReference>
<dbReference type="SUPFAM" id="SSF102114">
    <property type="entry name" value="Radical SAM enzymes"/>
    <property type="match status" value="1"/>
</dbReference>
<dbReference type="PROSITE" id="PS51449">
    <property type="entry name" value="MTTASE_N"/>
    <property type="match status" value="1"/>
</dbReference>
<dbReference type="PROSITE" id="PS01278">
    <property type="entry name" value="MTTASE_RADICAL"/>
    <property type="match status" value="1"/>
</dbReference>
<dbReference type="PROSITE" id="PS51918">
    <property type="entry name" value="RADICAL_SAM"/>
    <property type="match status" value="1"/>
</dbReference>
<dbReference type="PROSITE" id="PS50926">
    <property type="entry name" value="TRAM"/>
    <property type="match status" value="1"/>
</dbReference>
<evidence type="ECO:0000255" key="1">
    <source>
        <dbReference type="HAMAP-Rule" id="MF_01865"/>
    </source>
</evidence>
<evidence type="ECO:0000255" key="2">
    <source>
        <dbReference type="PROSITE-ProRule" id="PRU01266"/>
    </source>
</evidence>
<gene>
    <name evidence="1" type="primary">rimO</name>
    <name type="ordered locus">PSPA7_4596</name>
</gene>
<keyword id="KW-0004">4Fe-4S</keyword>
<keyword id="KW-0963">Cytoplasm</keyword>
<keyword id="KW-0408">Iron</keyword>
<keyword id="KW-0411">Iron-sulfur</keyword>
<keyword id="KW-0479">Metal-binding</keyword>
<keyword id="KW-0949">S-adenosyl-L-methionine</keyword>
<keyword id="KW-0808">Transferase</keyword>
<protein>
    <recommendedName>
        <fullName evidence="1">Ribosomal protein uS12 methylthiotransferase RimO</fullName>
        <shortName evidence="1">uS12 MTTase</shortName>
        <shortName evidence="1">uS12 methylthiotransferase</shortName>
        <ecNumber evidence="1">2.8.4.4</ecNumber>
    </recommendedName>
    <alternativeName>
        <fullName evidence="1">Ribosomal protein uS12 (aspartate-C(3))-methylthiotransferase</fullName>
    </alternativeName>
    <alternativeName>
        <fullName evidence="1">Ribosome maturation factor RimO</fullName>
    </alternativeName>
</protein>
<organism>
    <name type="scientific">Pseudomonas paraeruginosa (strain DSM 24068 / PA7)</name>
    <name type="common">Pseudomonas aeruginosa (strain PA7)</name>
    <dbReference type="NCBI Taxonomy" id="381754"/>
    <lineage>
        <taxon>Bacteria</taxon>
        <taxon>Pseudomonadati</taxon>
        <taxon>Pseudomonadota</taxon>
        <taxon>Gammaproteobacteria</taxon>
        <taxon>Pseudomonadales</taxon>
        <taxon>Pseudomonadaceae</taxon>
        <taxon>Pseudomonas</taxon>
        <taxon>Pseudomonas paraeruginosa</taxon>
    </lineage>
</organism>
<comment type="function">
    <text evidence="1">Catalyzes the methylthiolation of an aspartic acid residue of ribosomal protein uS12.</text>
</comment>
<comment type="catalytic activity">
    <reaction evidence="1">
        <text>L-aspartate(89)-[ribosomal protein uS12]-hydrogen + (sulfur carrier)-SH + AH2 + 2 S-adenosyl-L-methionine = 3-methylsulfanyl-L-aspartate(89)-[ribosomal protein uS12]-hydrogen + (sulfur carrier)-H + 5'-deoxyadenosine + L-methionine + A + S-adenosyl-L-homocysteine + 2 H(+)</text>
        <dbReference type="Rhea" id="RHEA:37087"/>
        <dbReference type="Rhea" id="RHEA-COMP:10460"/>
        <dbReference type="Rhea" id="RHEA-COMP:10461"/>
        <dbReference type="Rhea" id="RHEA-COMP:14737"/>
        <dbReference type="Rhea" id="RHEA-COMP:14739"/>
        <dbReference type="ChEBI" id="CHEBI:13193"/>
        <dbReference type="ChEBI" id="CHEBI:15378"/>
        <dbReference type="ChEBI" id="CHEBI:17319"/>
        <dbReference type="ChEBI" id="CHEBI:17499"/>
        <dbReference type="ChEBI" id="CHEBI:29917"/>
        <dbReference type="ChEBI" id="CHEBI:29961"/>
        <dbReference type="ChEBI" id="CHEBI:57844"/>
        <dbReference type="ChEBI" id="CHEBI:57856"/>
        <dbReference type="ChEBI" id="CHEBI:59789"/>
        <dbReference type="ChEBI" id="CHEBI:64428"/>
        <dbReference type="ChEBI" id="CHEBI:73599"/>
        <dbReference type="EC" id="2.8.4.4"/>
    </reaction>
</comment>
<comment type="cofactor">
    <cofactor evidence="1">
        <name>[4Fe-4S] cluster</name>
        <dbReference type="ChEBI" id="CHEBI:49883"/>
    </cofactor>
    <text evidence="1">Binds 2 [4Fe-4S] clusters. One cluster is coordinated with 3 cysteines and an exchangeable S-adenosyl-L-methionine.</text>
</comment>
<comment type="subcellular location">
    <subcellularLocation>
        <location evidence="1">Cytoplasm</location>
    </subcellularLocation>
</comment>
<comment type="similarity">
    <text evidence="1">Belongs to the methylthiotransferase family. RimO subfamily.</text>
</comment>